<dbReference type="EMBL" id="LT708304">
    <property type="protein sequence ID" value="SIT99342.1"/>
    <property type="molecule type" value="Genomic_DNA"/>
</dbReference>
<dbReference type="RefSeq" id="NP_854401.1">
    <property type="nucleotide sequence ID" value="NC_002945.3"/>
</dbReference>
<dbReference type="RefSeq" id="WP_003403683.1">
    <property type="nucleotide sequence ID" value="NC_002945.4"/>
</dbReference>
<dbReference type="SMR" id="P66182"/>
<dbReference type="GeneID" id="45424687"/>
<dbReference type="KEGG" id="mbo:BQ2027_MB0743"/>
<dbReference type="PATRIC" id="fig|233413.5.peg.810"/>
<dbReference type="Proteomes" id="UP000001419">
    <property type="component" value="Chromosome"/>
</dbReference>
<dbReference type="GO" id="GO:0022625">
    <property type="term" value="C:cytosolic large ribosomal subunit"/>
    <property type="evidence" value="ECO:0007669"/>
    <property type="project" value="TreeGrafter"/>
</dbReference>
<dbReference type="GO" id="GO:0003735">
    <property type="term" value="F:structural constituent of ribosome"/>
    <property type="evidence" value="ECO:0007669"/>
    <property type="project" value="InterPro"/>
</dbReference>
<dbReference type="GO" id="GO:0006412">
    <property type="term" value="P:translation"/>
    <property type="evidence" value="ECO:0007669"/>
    <property type="project" value="UniProtKB-UniRule"/>
</dbReference>
<dbReference type="CDD" id="cd01658">
    <property type="entry name" value="Ribosomal_L30"/>
    <property type="match status" value="1"/>
</dbReference>
<dbReference type="FunFam" id="3.30.1390.20:FF:000001">
    <property type="entry name" value="50S ribosomal protein L30"/>
    <property type="match status" value="1"/>
</dbReference>
<dbReference type="Gene3D" id="3.30.1390.20">
    <property type="entry name" value="Ribosomal protein L30, ferredoxin-like fold domain"/>
    <property type="match status" value="1"/>
</dbReference>
<dbReference type="HAMAP" id="MF_01371_B">
    <property type="entry name" value="Ribosomal_uL30_B"/>
    <property type="match status" value="1"/>
</dbReference>
<dbReference type="InterPro" id="IPR036919">
    <property type="entry name" value="Ribo_uL30_ferredoxin-like_sf"/>
</dbReference>
<dbReference type="InterPro" id="IPR005996">
    <property type="entry name" value="Ribosomal_uL30_bac-type"/>
</dbReference>
<dbReference type="InterPro" id="IPR018038">
    <property type="entry name" value="Ribosomal_uL30_CS"/>
</dbReference>
<dbReference type="InterPro" id="IPR016082">
    <property type="entry name" value="Ribosomal_uL30_ferredoxin-like"/>
</dbReference>
<dbReference type="NCBIfam" id="TIGR01308">
    <property type="entry name" value="rpmD_bact"/>
    <property type="match status" value="1"/>
</dbReference>
<dbReference type="PANTHER" id="PTHR15892:SF2">
    <property type="entry name" value="LARGE RIBOSOMAL SUBUNIT PROTEIN UL30M"/>
    <property type="match status" value="1"/>
</dbReference>
<dbReference type="PANTHER" id="PTHR15892">
    <property type="entry name" value="MITOCHONDRIAL RIBOSOMAL PROTEIN L30"/>
    <property type="match status" value="1"/>
</dbReference>
<dbReference type="Pfam" id="PF00327">
    <property type="entry name" value="Ribosomal_L30"/>
    <property type="match status" value="1"/>
</dbReference>
<dbReference type="PIRSF" id="PIRSF002211">
    <property type="entry name" value="Ribosomal_L30_bac-type"/>
    <property type="match status" value="1"/>
</dbReference>
<dbReference type="SUPFAM" id="SSF55129">
    <property type="entry name" value="Ribosomal protein L30p/L7e"/>
    <property type="match status" value="1"/>
</dbReference>
<dbReference type="PROSITE" id="PS00634">
    <property type="entry name" value="RIBOSOMAL_L30"/>
    <property type="match status" value="1"/>
</dbReference>
<organism>
    <name type="scientific">Mycobacterium bovis (strain ATCC BAA-935 / AF2122/97)</name>
    <dbReference type="NCBI Taxonomy" id="233413"/>
    <lineage>
        <taxon>Bacteria</taxon>
        <taxon>Bacillati</taxon>
        <taxon>Actinomycetota</taxon>
        <taxon>Actinomycetes</taxon>
        <taxon>Mycobacteriales</taxon>
        <taxon>Mycobacteriaceae</taxon>
        <taxon>Mycobacterium</taxon>
        <taxon>Mycobacterium tuberculosis complex</taxon>
    </lineage>
</organism>
<reference key="1">
    <citation type="journal article" date="2003" name="Proc. Natl. Acad. Sci. U.S.A.">
        <title>The complete genome sequence of Mycobacterium bovis.</title>
        <authorList>
            <person name="Garnier T."/>
            <person name="Eiglmeier K."/>
            <person name="Camus J.-C."/>
            <person name="Medina N."/>
            <person name="Mansoor H."/>
            <person name="Pryor M."/>
            <person name="Duthoy S."/>
            <person name="Grondin S."/>
            <person name="Lacroix C."/>
            <person name="Monsempe C."/>
            <person name="Simon S."/>
            <person name="Harris B."/>
            <person name="Atkin R."/>
            <person name="Doggett J."/>
            <person name="Mayes R."/>
            <person name="Keating L."/>
            <person name="Wheeler P.R."/>
            <person name="Parkhill J."/>
            <person name="Barrell B.G."/>
            <person name="Cole S.T."/>
            <person name="Gordon S.V."/>
            <person name="Hewinson R.G."/>
        </authorList>
    </citation>
    <scope>NUCLEOTIDE SEQUENCE [LARGE SCALE GENOMIC DNA]</scope>
    <source>
        <strain>ATCC BAA-935 / AF2122/97</strain>
    </source>
</reference>
<reference key="2">
    <citation type="journal article" date="2017" name="Genome Announc.">
        <title>Updated reference genome sequence and annotation of Mycobacterium bovis AF2122/97.</title>
        <authorList>
            <person name="Malone K.M."/>
            <person name="Farrell D."/>
            <person name="Stuber T.P."/>
            <person name="Schubert O.T."/>
            <person name="Aebersold R."/>
            <person name="Robbe-Austerman S."/>
            <person name="Gordon S.V."/>
        </authorList>
    </citation>
    <scope>NUCLEOTIDE SEQUENCE [LARGE SCALE GENOMIC DNA]</scope>
    <scope>GENOME REANNOTATION</scope>
    <source>
        <strain>ATCC BAA-935 / AF2122/97</strain>
    </source>
</reference>
<accession>P66182</accession>
<accession>A0A1R3XYD0</accession>
<accession>P95070</accession>
<accession>X2BFS7</accession>
<protein>
    <recommendedName>
        <fullName evidence="1">Large ribosomal subunit protein uL30</fullName>
    </recommendedName>
    <alternativeName>
        <fullName evidence="2">50S ribosomal protein L30</fullName>
    </alternativeName>
</protein>
<gene>
    <name evidence="1" type="primary">rpmD</name>
    <name type="ordered locus">BQ2027_MB0743</name>
</gene>
<name>RL30_MYCBO</name>
<comment type="subunit">
    <text evidence="1">Part of the 50S ribosomal subunit.</text>
</comment>
<comment type="similarity">
    <text evidence="1">Belongs to the universal ribosomal protein uL30 family.</text>
</comment>
<feature type="chain" id="PRO_0000104600" description="Large ribosomal subunit protein uL30">
    <location>
        <begin position="1"/>
        <end position="65"/>
    </location>
</feature>
<sequence length="65" mass="7347">MSQLKITQVRSTIGARWKQRESLRTLGLRRIRHSVIREDNAATRGLIAVVRHLVEVEPAQTGGKT</sequence>
<proteinExistence type="inferred from homology"/>
<keyword id="KW-1185">Reference proteome</keyword>
<keyword id="KW-0687">Ribonucleoprotein</keyword>
<keyword id="KW-0689">Ribosomal protein</keyword>
<evidence type="ECO:0000255" key="1">
    <source>
        <dbReference type="HAMAP-Rule" id="MF_01371"/>
    </source>
</evidence>
<evidence type="ECO:0000305" key="2"/>